<name>MATK_AMBTC</name>
<organism>
    <name type="scientific">Amborella trichopoda</name>
    <dbReference type="NCBI Taxonomy" id="13333"/>
    <lineage>
        <taxon>Eukaryota</taxon>
        <taxon>Viridiplantae</taxon>
        <taxon>Streptophyta</taxon>
        <taxon>Embryophyta</taxon>
        <taxon>Tracheophyta</taxon>
        <taxon>Spermatophyta</taxon>
        <taxon>Magnoliopsida</taxon>
        <taxon>Amborellales</taxon>
        <taxon>Amborellaceae</taxon>
        <taxon>Amborella</taxon>
    </lineage>
</organism>
<reference key="1">
    <citation type="journal article" date="2003" name="Mol. Biol. Evol.">
        <title>Analysis of the Amborella trichopoda chloroplast genome sequence suggests that Amborella is not a basal angiosperm.</title>
        <authorList>
            <person name="Goremykin V.V."/>
            <person name="Hirsch-Ernst K.I."/>
            <person name="Wolfl S."/>
            <person name="Hellwig F.H."/>
        </authorList>
    </citation>
    <scope>NUCLEOTIDE SEQUENCE [LARGE SCALE GENOMIC DNA]</scope>
</reference>
<geneLocation type="chloroplast"/>
<sequence length="501" mass="59515">MEELRGYLEIDRPHQQRFLYPLLFQESIYALAHNHGLNGSILYEPMEDLGHDKKSSSLNVKRLIIQMYQQNHFIISFNDSNQNRFLGHSRNSYFQMVSEGFAVIVEIPFSMRLVSSLEKGSESHNFQSIHSIFPFLEDKLSYLNYVLDILIPHPIHLEILVQSLRQWIRDLPSLHLLRFFLHEHQNWNSFITTNTKKCSSFFSRENQRLFLFLYNFHVYQFESLFVFLRKQFFHLRSISFGSFLERTHFYGKIENFVVSMRNHSQNILWLFKDLFMHYVRYKGKSIMASRGTYLLMNKWKSHLVNFWQFRFYFWSQPGRIHINELSNHSFYFPGYLSGLRLNPSMVRSEMLENSFMIDAVIKRFDTVVPTIFLIGSLAKVKLCNVSGHPISKSVWADSSDSDILDQFGRICRNLSHYHSGSYKKHSLCRIKYILRLSCARTLARKHKSTVRAILKRLGSEFLDEFLTEEQEILSLIFPKTPFHSGRIWYLDIIRIHSLANH</sequence>
<evidence type="ECO:0000255" key="1">
    <source>
        <dbReference type="HAMAP-Rule" id="MF_01390"/>
    </source>
</evidence>
<gene>
    <name evidence="1" type="primary">matK</name>
</gene>
<feature type="chain" id="PRO_0000143226" description="Maturase K">
    <location>
        <begin position="1"/>
        <end position="501"/>
    </location>
</feature>
<proteinExistence type="inferred from homology"/>
<dbReference type="EMBL" id="AJ506156">
    <property type="protein sequence ID" value="CAD45090.1"/>
    <property type="molecule type" value="Genomic_DNA"/>
</dbReference>
<dbReference type="RefSeq" id="NP_904080.1">
    <property type="nucleotide sequence ID" value="NC_005086.1"/>
</dbReference>
<dbReference type="STRING" id="13333.Q70Y16"/>
<dbReference type="GeneID" id="2546598"/>
<dbReference type="KEGG" id="atr:2546598"/>
<dbReference type="OrthoDB" id="1886907at2759"/>
<dbReference type="Proteomes" id="UP000017836">
    <property type="component" value="Chloroplast"/>
</dbReference>
<dbReference type="GO" id="GO:0009507">
    <property type="term" value="C:chloroplast"/>
    <property type="evidence" value="ECO:0007669"/>
    <property type="project" value="UniProtKB-SubCell"/>
</dbReference>
<dbReference type="GO" id="GO:0003723">
    <property type="term" value="F:RNA binding"/>
    <property type="evidence" value="ECO:0007669"/>
    <property type="project" value="UniProtKB-KW"/>
</dbReference>
<dbReference type="GO" id="GO:0006397">
    <property type="term" value="P:mRNA processing"/>
    <property type="evidence" value="ECO:0007669"/>
    <property type="project" value="UniProtKB-KW"/>
</dbReference>
<dbReference type="GO" id="GO:0008380">
    <property type="term" value="P:RNA splicing"/>
    <property type="evidence" value="ECO:0007669"/>
    <property type="project" value="UniProtKB-UniRule"/>
</dbReference>
<dbReference type="GO" id="GO:0008033">
    <property type="term" value="P:tRNA processing"/>
    <property type="evidence" value="ECO:0007669"/>
    <property type="project" value="UniProtKB-KW"/>
</dbReference>
<dbReference type="HAMAP" id="MF_01390">
    <property type="entry name" value="MatK"/>
    <property type="match status" value="1"/>
</dbReference>
<dbReference type="InterPro" id="IPR024937">
    <property type="entry name" value="Domain_X"/>
</dbReference>
<dbReference type="InterPro" id="IPR002866">
    <property type="entry name" value="Maturase_MatK"/>
</dbReference>
<dbReference type="InterPro" id="IPR024942">
    <property type="entry name" value="Maturase_MatK_N"/>
</dbReference>
<dbReference type="PANTHER" id="PTHR34811">
    <property type="entry name" value="MATURASE K"/>
    <property type="match status" value="1"/>
</dbReference>
<dbReference type="PANTHER" id="PTHR34811:SF1">
    <property type="entry name" value="MATURASE K"/>
    <property type="match status" value="1"/>
</dbReference>
<dbReference type="Pfam" id="PF01348">
    <property type="entry name" value="Intron_maturas2"/>
    <property type="match status" value="1"/>
</dbReference>
<dbReference type="Pfam" id="PF01824">
    <property type="entry name" value="MatK_N"/>
    <property type="match status" value="1"/>
</dbReference>
<accession>Q70Y16</accession>
<keyword id="KW-0150">Chloroplast</keyword>
<keyword id="KW-0507">mRNA processing</keyword>
<keyword id="KW-0934">Plastid</keyword>
<keyword id="KW-1185">Reference proteome</keyword>
<keyword id="KW-0694">RNA-binding</keyword>
<keyword id="KW-0819">tRNA processing</keyword>
<comment type="function">
    <text evidence="1">Usually encoded in the trnK tRNA gene intron. Probably assists in splicing its own and other chloroplast group II introns.</text>
</comment>
<comment type="subcellular location">
    <subcellularLocation>
        <location>Plastid</location>
        <location>Chloroplast</location>
    </subcellularLocation>
</comment>
<comment type="similarity">
    <text evidence="1">Belongs to the intron maturase 2 family. MatK subfamily.</text>
</comment>
<protein>
    <recommendedName>
        <fullName evidence="1">Maturase K</fullName>
    </recommendedName>
    <alternativeName>
        <fullName evidence="1">Intron maturase</fullName>
    </alternativeName>
</protein>